<accession>C3MCP8</accession>
<feature type="chain" id="PRO_1000146155" description="Large ribosomal subunit protein bL35">
    <location>
        <begin position="1"/>
        <end position="67"/>
    </location>
</feature>
<comment type="similarity">
    <text evidence="1">Belongs to the bacterial ribosomal protein bL35 family.</text>
</comment>
<organism>
    <name type="scientific">Sinorhizobium fredii (strain NBRC 101917 / NGR234)</name>
    <dbReference type="NCBI Taxonomy" id="394"/>
    <lineage>
        <taxon>Bacteria</taxon>
        <taxon>Pseudomonadati</taxon>
        <taxon>Pseudomonadota</taxon>
        <taxon>Alphaproteobacteria</taxon>
        <taxon>Hyphomicrobiales</taxon>
        <taxon>Rhizobiaceae</taxon>
        <taxon>Sinorhizobium/Ensifer group</taxon>
        <taxon>Sinorhizobium</taxon>
    </lineage>
</organism>
<gene>
    <name evidence="1" type="primary">rpmI</name>
    <name type="ordered locus">NGR_c36250</name>
</gene>
<proteinExistence type="inferred from homology"/>
<protein>
    <recommendedName>
        <fullName evidence="1">Large ribosomal subunit protein bL35</fullName>
    </recommendedName>
    <alternativeName>
        <fullName evidence="2">50S ribosomal protein L35</fullName>
    </alternativeName>
</protein>
<evidence type="ECO:0000255" key="1">
    <source>
        <dbReference type="HAMAP-Rule" id="MF_00514"/>
    </source>
</evidence>
<evidence type="ECO:0000305" key="2"/>
<reference key="1">
    <citation type="journal article" date="2009" name="Appl. Environ. Microbiol.">
        <title>Rhizobium sp. strain NGR234 possesses a remarkable number of secretion systems.</title>
        <authorList>
            <person name="Schmeisser C."/>
            <person name="Liesegang H."/>
            <person name="Krysciak D."/>
            <person name="Bakkou N."/>
            <person name="Le Quere A."/>
            <person name="Wollherr A."/>
            <person name="Heinemeyer I."/>
            <person name="Morgenstern B."/>
            <person name="Pommerening-Roeser A."/>
            <person name="Flores M."/>
            <person name="Palacios R."/>
            <person name="Brenner S."/>
            <person name="Gottschalk G."/>
            <person name="Schmitz R.A."/>
            <person name="Broughton W.J."/>
            <person name="Perret X."/>
            <person name="Strittmatter A.W."/>
            <person name="Streit W.R."/>
        </authorList>
    </citation>
    <scope>NUCLEOTIDE SEQUENCE [LARGE SCALE GENOMIC DNA]</scope>
    <source>
        <strain>NBRC 101917 / NGR234</strain>
    </source>
</reference>
<sequence length="67" mass="7386">MPKMKTKSSAKKRFKVTATGKVRAAAAGKRHGMIKRTNKFIRDARGTMVLAEPDGKKVVKNYLPNGL</sequence>
<keyword id="KW-1185">Reference proteome</keyword>
<keyword id="KW-0687">Ribonucleoprotein</keyword>
<keyword id="KW-0689">Ribosomal protein</keyword>
<name>RL35_SINFN</name>
<dbReference type="EMBL" id="CP001389">
    <property type="protein sequence ID" value="ACP27346.1"/>
    <property type="molecule type" value="Genomic_DNA"/>
</dbReference>
<dbReference type="RefSeq" id="WP_012710090.1">
    <property type="nucleotide sequence ID" value="NC_012587.1"/>
</dbReference>
<dbReference type="RefSeq" id="YP_002828099.1">
    <property type="nucleotide sequence ID" value="NC_012587.1"/>
</dbReference>
<dbReference type="SMR" id="C3MCP8"/>
<dbReference type="STRING" id="394.NGR_c36250"/>
<dbReference type="KEGG" id="rhi:NGR_c36250"/>
<dbReference type="PATRIC" id="fig|394.7.peg.6477"/>
<dbReference type="eggNOG" id="COG0291">
    <property type="taxonomic scope" value="Bacteria"/>
</dbReference>
<dbReference type="HOGENOM" id="CLU_169643_2_1_5"/>
<dbReference type="OrthoDB" id="9804851at2"/>
<dbReference type="Proteomes" id="UP000001054">
    <property type="component" value="Chromosome"/>
</dbReference>
<dbReference type="GO" id="GO:0022625">
    <property type="term" value="C:cytosolic large ribosomal subunit"/>
    <property type="evidence" value="ECO:0007669"/>
    <property type="project" value="TreeGrafter"/>
</dbReference>
<dbReference type="GO" id="GO:0003735">
    <property type="term" value="F:structural constituent of ribosome"/>
    <property type="evidence" value="ECO:0007669"/>
    <property type="project" value="InterPro"/>
</dbReference>
<dbReference type="GO" id="GO:0006412">
    <property type="term" value="P:translation"/>
    <property type="evidence" value="ECO:0007669"/>
    <property type="project" value="UniProtKB-UniRule"/>
</dbReference>
<dbReference type="FunFam" id="4.10.410.60:FF:000001">
    <property type="entry name" value="50S ribosomal protein L35"/>
    <property type="match status" value="1"/>
</dbReference>
<dbReference type="Gene3D" id="4.10.410.60">
    <property type="match status" value="1"/>
</dbReference>
<dbReference type="HAMAP" id="MF_00514">
    <property type="entry name" value="Ribosomal_bL35"/>
    <property type="match status" value="1"/>
</dbReference>
<dbReference type="InterPro" id="IPR001706">
    <property type="entry name" value="Ribosomal_bL35"/>
</dbReference>
<dbReference type="InterPro" id="IPR021137">
    <property type="entry name" value="Ribosomal_bL35-like"/>
</dbReference>
<dbReference type="InterPro" id="IPR018265">
    <property type="entry name" value="Ribosomal_bL35_CS"/>
</dbReference>
<dbReference type="InterPro" id="IPR037229">
    <property type="entry name" value="Ribosomal_bL35_sf"/>
</dbReference>
<dbReference type="NCBIfam" id="TIGR00001">
    <property type="entry name" value="rpmI_bact"/>
    <property type="match status" value="1"/>
</dbReference>
<dbReference type="PANTHER" id="PTHR33343">
    <property type="entry name" value="54S RIBOSOMAL PROTEIN BL35M"/>
    <property type="match status" value="1"/>
</dbReference>
<dbReference type="PANTHER" id="PTHR33343:SF1">
    <property type="entry name" value="LARGE RIBOSOMAL SUBUNIT PROTEIN BL35M"/>
    <property type="match status" value="1"/>
</dbReference>
<dbReference type="Pfam" id="PF01632">
    <property type="entry name" value="Ribosomal_L35p"/>
    <property type="match status" value="1"/>
</dbReference>
<dbReference type="PRINTS" id="PR00064">
    <property type="entry name" value="RIBOSOMALL35"/>
</dbReference>
<dbReference type="SUPFAM" id="SSF143034">
    <property type="entry name" value="L35p-like"/>
    <property type="match status" value="1"/>
</dbReference>
<dbReference type="PROSITE" id="PS00936">
    <property type="entry name" value="RIBOSOMAL_L35"/>
    <property type="match status" value="1"/>
</dbReference>